<accession>A7MHT9</accession>
<proteinExistence type="inferred from homology"/>
<reference key="1">
    <citation type="journal article" date="2010" name="PLoS ONE">
        <title>Genome sequence of Cronobacter sakazakii BAA-894 and comparative genomic hybridization analysis with other Cronobacter species.</title>
        <authorList>
            <person name="Kucerova E."/>
            <person name="Clifton S.W."/>
            <person name="Xia X.Q."/>
            <person name="Long F."/>
            <person name="Porwollik S."/>
            <person name="Fulton L."/>
            <person name="Fronick C."/>
            <person name="Minx P."/>
            <person name="Kyung K."/>
            <person name="Warren W."/>
            <person name="Fulton R."/>
            <person name="Feng D."/>
            <person name="Wollam A."/>
            <person name="Shah N."/>
            <person name="Bhonagiri V."/>
            <person name="Nash W.E."/>
            <person name="Hallsworth-Pepin K."/>
            <person name="Wilson R.K."/>
            <person name="McClelland M."/>
            <person name="Forsythe S.J."/>
        </authorList>
    </citation>
    <scope>NUCLEOTIDE SEQUENCE [LARGE SCALE GENOMIC DNA]</scope>
    <source>
        <strain>ATCC BAA-894</strain>
    </source>
</reference>
<evidence type="ECO:0000255" key="1">
    <source>
        <dbReference type="HAMAP-Rule" id="MF_01818"/>
    </source>
</evidence>
<feature type="chain" id="PRO_1000070281" description="Ribonuclease BN">
    <location>
        <begin position="1"/>
        <end position="304"/>
    </location>
</feature>
<feature type="active site" description="Proton acceptor" evidence="1">
    <location>
        <position position="67"/>
    </location>
</feature>
<feature type="binding site" evidence="1">
    <location>
        <position position="63"/>
    </location>
    <ligand>
        <name>Zn(2+)</name>
        <dbReference type="ChEBI" id="CHEBI:29105"/>
        <label>1</label>
        <note>catalytic</note>
    </ligand>
</feature>
<feature type="binding site" evidence="1">
    <location>
        <position position="65"/>
    </location>
    <ligand>
        <name>Zn(2+)</name>
        <dbReference type="ChEBI" id="CHEBI:29105"/>
        <label>1</label>
        <note>catalytic</note>
    </ligand>
</feature>
<feature type="binding site" evidence="1">
    <location>
        <position position="67"/>
    </location>
    <ligand>
        <name>Zn(2+)</name>
        <dbReference type="ChEBI" id="CHEBI:29105"/>
        <label>2</label>
        <note>catalytic</note>
    </ligand>
</feature>
<feature type="binding site" evidence="1">
    <location>
        <position position="68"/>
    </location>
    <ligand>
        <name>Zn(2+)</name>
        <dbReference type="ChEBI" id="CHEBI:29105"/>
        <label>2</label>
        <note>catalytic</note>
    </ligand>
</feature>
<feature type="binding site" evidence="1">
    <location>
        <position position="140"/>
    </location>
    <ligand>
        <name>Zn(2+)</name>
        <dbReference type="ChEBI" id="CHEBI:29105"/>
        <label>1</label>
        <note>catalytic</note>
    </ligand>
</feature>
<feature type="binding site" evidence="1">
    <location>
        <position position="211"/>
    </location>
    <ligand>
        <name>Zn(2+)</name>
        <dbReference type="ChEBI" id="CHEBI:29105"/>
        <label>1</label>
        <note>catalytic</note>
    </ligand>
</feature>
<feature type="binding site" evidence="1">
    <location>
        <position position="211"/>
    </location>
    <ligand>
        <name>Zn(2+)</name>
        <dbReference type="ChEBI" id="CHEBI:29105"/>
        <label>2</label>
        <note>catalytic</note>
    </ligand>
</feature>
<feature type="binding site" evidence="1">
    <location>
        <position position="269"/>
    </location>
    <ligand>
        <name>Zn(2+)</name>
        <dbReference type="ChEBI" id="CHEBI:29105"/>
        <label>2</label>
        <note>catalytic</note>
    </ligand>
</feature>
<name>RBN_CROS8</name>
<organism>
    <name type="scientific">Cronobacter sakazakii (strain ATCC BAA-894)</name>
    <name type="common">Enterobacter sakazakii</name>
    <dbReference type="NCBI Taxonomy" id="290339"/>
    <lineage>
        <taxon>Bacteria</taxon>
        <taxon>Pseudomonadati</taxon>
        <taxon>Pseudomonadota</taxon>
        <taxon>Gammaproteobacteria</taxon>
        <taxon>Enterobacterales</taxon>
        <taxon>Enterobacteriaceae</taxon>
        <taxon>Cronobacter</taxon>
    </lineage>
</organism>
<comment type="function">
    <text evidence="1">Zinc phosphodiesterase, which has both exoribonuclease and endoribonuclease activities.</text>
</comment>
<comment type="cofactor">
    <cofactor evidence="1">
        <name>Zn(2+)</name>
        <dbReference type="ChEBI" id="CHEBI:29105"/>
    </cofactor>
    <text evidence="1">Binds 2 Zn(2+) ions.</text>
</comment>
<comment type="subunit">
    <text evidence="1">Homodimer.</text>
</comment>
<comment type="similarity">
    <text evidence="1">Belongs to the RNase Z family. RNase BN subfamily.</text>
</comment>
<dbReference type="EC" id="3.1.-.-" evidence="1"/>
<dbReference type="EMBL" id="CP000783">
    <property type="protein sequence ID" value="ABU76215.1"/>
    <property type="molecule type" value="Genomic_DNA"/>
</dbReference>
<dbReference type="RefSeq" id="WP_004388264.1">
    <property type="nucleotide sequence ID" value="NC_009778.1"/>
</dbReference>
<dbReference type="SMR" id="A7MHT9"/>
<dbReference type="KEGG" id="esa:ESA_00945"/>
<dbReference type="PATRIC" id="fig|290339.8.peg.843"/>
<dbReference type="HOGENOM" id="CLU_031317_2_0_6"/>
<dbReference type="Proteomes" id="UP000000260">
    <property type="component" value="Chromosome"/>
</dbReference>
<dbReference type="GO" id="GO:0042781">
    <property type="term" value="F:3'-tRNA processing endoribonuclease activity"/>
    <property type="evidence" value="ECO:0007669"/>
    <property type="project" value="TreeGrafter"/>
</dbReference>
<dbReference type="GO" id="GO:0004527">
    <property type="term" value="F:exonuclease activity"/>
    <property type="evidence" value="ECO:0007669"/>
    <property type="project" value="UniProtKB-UniRule"/>
</dbReference>
<dbReference type="GO" id="GO:0008270">
    <property type="term" value="F:zinc ion binding"/>
    <property type="evidence" value="ECO:0007669"/>
    <property type="project" value="UniProtKB-UniRule"/>
</dbReference>
<dbReference type="CDD" id="cd07717">
    <property type="entry name" value="RNaseZ_ZiPD-like_MBL-fold"/>
    <property type="match status" value="1"/>
</dbReference>
<dbReference type="FunFam" id="3.60.15.10:FF:000002">
    <property type="entry name" value="Ribonuclease Z"/>
    <property type="match status" value="1"/>
</dbReference>
<dbReference type="Gene3D" id="3.60.15.10">
    <property type="entry name" value="Ribonuclease Z/Hydroxyacylglutathione hydrolase-like"/>
    <property type="match status" value="1"/>
</dbReference>
<dbReference type="HAMAP" id="MF_01818">
    <property type="entry name" value="RNase_Z_BN"/>
    <property type="match status" value="1"/>
</dbReference>
<dbReference type="InterPro" id="IPR001279">
    <property type="entry name" value="Metallo-B-lactamas"/>
</dbReference>
<dbReference type="InterPro" id="IPR036866">
    <property type="entry name" value="RibonucZ/Hydroxyglut_hydro"/>
</dbReference>
<dbReference type="InterPro" id="IPR013471">
    <property type="entry name" value="RNase_Z/BN"/>
</dbReference>
<dbReference type="NCBIfam" id="NF000800">
    <property type="entry name" value="PRK00055.1-1"/>
    <property type="match status" value="1"/>
</dbReference>
<dbReference type="NCBIfam" id="NF000801">
    <property type="entry name" value="PRK00055.1-3"/>
    <property type="match status" value="1"/>
</dbReference>
<dbReference type="NCBIfam" id="TIGR02651">
    <property type="entry name" value="RNase_Z"/>
    <property type="match status" value="1"/>
</dbReference>
<dbReference type="PANTHER" id="PTHR46018">
    <property type="entry name" value="ZINC PHOSPHODIESTERASE ELAC PROTEIN 1"/>
    <property type="match status" value="1"/>
</dbReference>
<dbReference type="PANTHER" id="PTHR46018:SF2">
    <property type="entry name" value="ZINC PHOSPHODIESTERASE ELAC PROTEIN 1"/>
    <property type="match status" value="1"/>
</dbReference>
<dbReference type="Pfam" id="PF12706">
    <property type="entry name" value="Lactamase_B_2"/>
    <property type="match status" value="2"/>
</dbReference>
<dbReference type="SMART" id="SM00849">
    <property type="entry name" value="Lactamase_B"/>
    <property type="match status" value="1"/>
</dbReference>
<dbReference type="SUPFAM" id="SSF56281">
    <property type="entry name" value="Metallo-hydrolase/oxidoreductase"/>
    <property type="match status" value="1"/>
</dbReference>
<protein>
    <recommendedName>
        <fullName evidence="1">Ribonuclease BN</fullName>
        <shortName evidence="1">RNase BN</shortName>
        <ecNumber evidence="1">3.1.-.-</ecNumber>
    </recommendedName>
    <alternativeName>
        <fullName evidence="1">Ribonuclease Z homolog</fullName>
        <shortName evidence="1">RNase Z homolog</shortName>
    </alternativeName>
</protein>
<gene>
    <name evidence="1" type="primary">rbn</name>
    <name type="synonym">rnz</name>
    <name type="ordered locus">ESA_00945</name>
</gene>
<keyword id="KW-0255">Endonuclease</keyword>
<keyword id="KW-0269">Exonuclease</keyword>
<keyword id="KW-0378">Hydrolase</keyword>
<keyword id="KW-0479">Metal-binding</keyword>
<keyword id="KW-0540">Nuclease</keyword>
<keyword id="KW-1185">Reference proteome</keyword>
<keyword id="KW-0819">tRNA processing</keyword>
<keyword id="KW-0862">Zinc</keyword>
<sequence length="304" mass="32815">MELTFLGTSAGLPSTTRNVTAIVLNPQNNRSGLWLFDCGEGTQHQMLRATATPGKIEKIFITHLHGDHIFGLPGLLCSRSMAGCETPLEIYGPKGIAEFVETTLRLSGSWTSYPLNVHEITEGQLLDDGELTVTAYPLTHPVECYGYRIEEQDKPGALDAARLKAAGVMPGPLFQQLKRGETVTLADGRTVCGADYLSAPRPGKKIAIFGDTGPTPQAVTLARDVDVMVHETTLEAAMAEKANGRGHSTTQQAAEVARDAGAKRLLMTHFSSRYSAEECQRLLAECQAIFPASELAEDFLTITV</sequence>